<gene>
    <name type="primary">OR2L8</name>
</gene>
<keyword id="KW-1003">Cell membrane</keyword>
<keyword id="KW-1015">Disulfide bond</keyword>
<keyword id="KW-0297">G-protein coupled receptor</keyword>
<keyword id="KW-0325">Glycoprotein</keyword>
<keyword id="KW-0472">Membrane</keyword>
<keyword id="KW-0552">Olfaction</keyword>
<keyword id="KW-0675">Receptor</keyword>
<keyword id="KW-1185">Reference proteome</keyword>
<keyword id="KW-0716">Sensory transduction</keyword>
<keyword id="KW-0807">Transducer</keyword>
<keyword id="KW-0812">Transmembrane</keyword>
<keyword id="KW-1133">Transmembrane helix</keyword>
<reference key="1">
    <citation type="submission" date="2001-07" db="EMBL/GenBank/DDBJ databases">
        <title>Genome-wide discovery and analysis of human seven transmembrane helix receptor genes.</title>
        <authorList>
            <person name="Suwa M."/>
            <person name="Sato T."/>
            <person name="Okouchi I."/>
            <person name="Arita M."/>
            <person name="Futami K."/>
            <person name="Matsumoto S."/>
            <person name="Tsutsumi S."/>
            <person name="Aburatani H."/>
            <person name="Asai K."/>
            <person name="Akiyama Y."/>
        </authorList>
    </citation>
    <scope>NUCLEOTIDE SEQUENCE [GENOMIC DNA]</scope>
</reference>
<reference key="2">
    <citation type="journal article" date="2004" name="Genome Res.">
        <title>The status, quality, and expansion of the NIH full-length cDNA project: the Mammalian Gene Collection (MGC).</title>
        <authorList>
            <consortium name="The MGC Project Team"/>
        </authorList>
    </citation>
    <scope>NUCLEOTIDE SEQUENCE [LARGE SCALE MRNA]</scope>
    <scope>VARIANTS ARG-294 AND LYS-301</scope>
</reference>
<reference key="3">
    <citation type="journal article" date="2004" name="Proc. Natl. Acad. Sci. U.S.A.">
        <title>The human olfactory receptor gene family.</title>
        <authorList>
            <person name="Malnic B."/>
            <person name="Godfrey P.A."/>
            <person name="Buck L.B."/>
        </authorList>
    </citation>
    <scope>IDENTIFICATION</scope>
</reference>
<reference key="4">
    <citation type="journal article" date="2004" name="Proc. Natl. Acad. Sci. U.S.A.">
        <authorList>
            <person name="Malnic B."/>
            <person name="Godfrey P.A."/>
            <person name="Buck L.B."/>
        </authorList>
    </citation>
    <scope>ERRATUM OF PUBMED:14983052</scope>
</reference>
<name>OR2L8_HUMAN</name>
<evidence type="ECO:0000255" key="1"/>
<evidence type="ECO:0000255" key="2">
    <source>
        <dbReference type="PROSITE-ProRule" id="PRU00521"/>
    </source>
</evidence>
<evidence type="ECO:0000269" key="3">
    <source>
    </source>
</evidence>
<evidence type="ECO:0000305" key="4"/>
<dbReference type="EMBL" id="AB065627">
    <property type="protein sequence ID" value="BAC05853.1"/>
    <property type="molecule type" value="Genomic_DNA"/>
</dbReference>
<dbReference type="EMBL" id="BC140751">
    <property type="protein sequence ID" value="AAI40752.1"/>
    <property type="molecule type" value="mRNA"/>
</dbReference>
<dbReference type="EMBL" id="BK004459">
    <property type="protein sequence ID" value="DAA04857.1"/>
    <property type="molecule type" value="Genomic_DNA"/>
</dbReference>
<dbReference type="RefSeq" id="NP_001001963.1">
    <property type="nucleotide sequence ID" value="NM_001001963.1"/>
</dbReference>
<dbReference type="SMR" id="Q8NGY9"/>
<dbReference type="FunCoup" id="Q8NGY9">
    <property type="interactions" value="459"/>
</dbReference>
<dbReference type="STRING" id="9606.ENSP00000485287"/>
<dbReference type="GlyCosmos" id="Q8NGY9">
    <property type="glycosylation" value="2 sites, No reported glycans"/>
</dbReference>
<dbReference type="GlyGen" id="Q8NGY9">
    <property type="glycosylation" value="2 sites"/>
</dbReference>
<dbReference type="BioMuta" id="OR2L8"/>
<dbReference type="DMDM" id="38372791"/>
<dbReference type="MassIVE" id="Q8NGY9"/>
<dbReference type="PaxDb" id="9606-ENSP00000349719"/>
<dbReference type="PeptideAtlas" id="Q8NGY9"/>
<dbReference type="Antibodypedia" id="79198">
    <property type="antibodies" value="71 antibodies from 15 providers"/>
</dbReference>
<dbReference type="DNASU" id="391190"/>
<dbReference type="Ensembl" id="ENST00000623922.1">
    <property type="protein sequence ID" value="ENSP00000485287.1"/>
    <property type="gene ID" value="ENSG00000279263.1"/>
</dbReference>
<dbReference type="GeneID" id="391190"/>
<dbReference type="KEGG" id="hsa:391190"/>
<dbReference type="MANE-Select" id="ENST00000623922.1">
    <property type="protein sequence ID" value="ENSP00000485287.1"/>
    <property type="RefSeq nucleotide sequence ID" value="NM_001001963.1"/>
    <property type="RefSeq protein sequence ID" value="NP_001001963.1"/>
</dbReference>
<dbReference type="UCSC" id="uc001idt.1">
    <property type="organism name" value="human"/>
</dbReference>
<dbReference type="AGR" id="HGNC:15014"/>
<dbReference type="CTD" id="391190"/>
<dbReference type="DisGeNET" id="391190"/>
<dbReference type="GeneCards" id="OR2L8"/>
<dbReference type="HGNC" id="HGNC:15014">
    <property type="gene designation" value="OR2L8"/>
</dbReference>
<dbReference type="HPA" id="ENSG00000279263">
    <property type="expression patterns" value="Not detected"/>
</dbReference>
<dbReference type="neXtProt" id="NX_Q8NGY9"/>
<dbReference type="PharmGKB" id="PA32189"/>
<dbReference type="VEuPathDB" id="HostDB:ENSG00000279263"/>
<dbReference type="eggNOG" id="ENOG502RTYI">
    <property type="taxonomic scope" value="Eukaryota"/>
</dbReference>
<dbReference type="GeneTree" id="ENSGT01130000278325"/>
<dbReference type="HOGENOM" id="CLU_012526_5_5_1"/>
<dbReference type="InParanoid" id="Q8NGY9"/>
<dbReference type="OMA" id="PEMASNY"/>
<dbReference type="OrthoDB" id="9834388at2759"/>
<dbReference type="PAN-GO" id="Q8NGY9">
    <property type="GO annotations" value="0 GO annotations based on evolutionary models"/>
</dbReference>
<dbReference type="PhylomeDB" id="Q8NGY9"/>
<dbReference type="TreeFam" id="TF337295"/>
<dbReference type="PathwayCommons" id="Q8NGY9"/>
<dbReference type="Reactome" id="R-HSA-9752946">
    <property type="pathway name" value="Expression and translocation of olfactory receptors"/>
</dbReference>
<dbReference type="BioGRID-ORCS" id="391190">
    <property type="hits" value="10 hits in 630 CRISPR screens"/>
</dbReference>
<dbReference type="GeneWiki" id="OR2L8"/>
<dbReference type="GenomeRNAi" id="391190"/>
<dbReference type="Pharos" id="Q8NGY9">
    <property type="development level" value="Tdark"/>
</dbReference>
<dbReference type="PRO" id="PR:Q8NGY9"/>
<dbReference type="Proteomes" id="UP000005640">
    <property type="component" value="Chromosome 1"/>
</dbReference>
<dbReference type="RNAct" id="Q8NGY9">
    <property type="molecule type" value="protein"/>
</dbReference>
<dbReference type="Bgee" id="ENSG00000279263">
    <property type="expression patterns" value="Expressed in adrenal tissue"/>
</dbReference>
<dbReference type="GO" id="GO:0005886">
    <property type="term" value="C:plasma membrane"/>
    <property type="evidence" value="ECO:0000318"/>
    <property type="project" value="GO_Central"/>
</dbReference>
<dbReference type="GO" id="GO:0004930">
    <property type="term" value="F:G protein-coupled receptor activity"/>
    <property type="evidence" value="ECO:0007669"/>
    <property type="project" value="UniProtKB-KW"/>
</dbReference>
<dbReference type="GO" id="GO:0004984">
    <property type="term" value="F:olfactory receptor activity"/>
    <property type="evidence" value="ECO:0000318"/>
    <property type="project" value="GO_Central"/>
</dbReference>
<dbReference type="GO" id="GO:0050911">
    <property type="term" value="P:detection of chemical stimulus involved in sensory perception of smell"/>
    <property type="evidence" value="ECO:0000318"/>
    <property type="project" value="GO_Central"/>
</dbReference>
<dbReference type="CDD" id="cd15421">
    <property type="entry name" value="7tmA_OR2T-like"/>
    <property type="match status" value="1"/>
</dbReference>
<dbReference type="FunFam" id="1.20.1070.10:FF:000008">
    <property type="entry name" value="Olfactory receptor"/>
    <property type="match status" value="1"/>
</dbReference>
<dbReference type="Gene3D" id="1.20.1070.10">
    <property type="entry name" value="Rhodopsin 7-helix transmembrane proteins"/>
    <property type="match status" value="1"/>
</dbReference>
<dbReference type="InterPro" id="IPR000276">
    <property type="entry name" value="GPCR_Rhodpsn"/>
</dbReference>
<dbReference type="InterPro" id="IPR017452">
    <property type="entry name" value="GPCR_Rhodpsn_7TM"/>
</dbReference>
<dbReference type="InterPro" id="IPR000725">
    <property type="entry name" value="Olfact_rcpt"/>
</dbReference>
<dbReference type="PANTHER" id="PTHR26453">
    <property type="entry name" value="OLFACTORY RECEPTOR"/>
    <property type="match status" value="1"/>
</dbReference>
<dbReference type="Pfam" id="PF13853">
    <property type="entry name" value="7tm_4"/>
    <property type="match status" value="1"/>
</dbReference>
<dbReference type="PRINTS" id="PR00237">
    <property type="entry name" value="GPCRRHODOPSN"/>
</dbReference>
<dbReference type="PRINTS" id="PR00245">
    <property type="entry name" value="OLFACTORYR"/>
</dbReference>
<dbReference type="SUPFAM" id="SSF81321">
    <property type="entry name" value="Family A G protein-coupled receptor-like"/>
    <property type="match status" value="1"/>
</dbReference>
<dbReference type="PROSITE" id="PS00237">
    <property type="entry name" value="G_PROTEIN_RECEP_F1_1"/>
    <property type="match status" value="1"/>
</dbReference>
<dbReference type="PROSITE" id="PS50262">
    <property type="entry name" value="G_PROTEIN_RECEP_F1_2"/>
    <property type="match status" value="1"/>
</dbReference>
<comment type="function">
    <text evidence="4">Odorant receptor.</text>
</comment>
<comment type="subcellular location">
    <subcellularLocation>
        <location>Cell membrane</location>
        <topology>Multi-pass membrane protein</topology>
    </subcellularLocation>
</comment>
<comment type="similarity">
    <text evidence="2">Belongs to the G-protein coupled receptor 1 family.</text>
</comment>
<comment type="online information" name="Human Olfactory Receptor Data Exploratorium (HORDE)">
    <link uri="http://genome.weizmann.ac.il/horde/card/index/symbol:OR2L8"/>
</comment>
<feature type="chain" id="PRO_0000150489" description="Olfactory receptor 2L8">
    <location>
        <begin position="1"/>
        <end position="312"/>
    </location>
</feature>
<feature type="topological domain" description="Extracellular" evidence="1">
    <location>
        <begin position="1"/>
        <end position="24"/>
    </location>
</feature>
<feature type="transmembrane region" description="Helical; Name=1" evidence="1">
    <location>
        <begin position="25"/>
        <end position="48"/>
    </location>
</feature>
<feature type="topological domain" description="Cytoplasmic" evidence="1">
    <location>
        <begin position="49"/>
        <end position="56"/>
    </location>
</feature>
<feature type="transmembrane region" description="Helical; Name=2" evidence="1">
    <location>
        <begin position="57"/>
        <end position="78"/>
    </location>
</feature>
<feature type="topological domain" description="Extracellular" evidence="1">
    <location>
        <begin position="79"/>
        <end position="99"/>
    </location>
</feature>
<feature type="transmembrane region" description="Helical; Name=3" evidence="1">
    <location>
        <begin position="100"/>
        <end position="119"/>
    </location>
</feature>
<feature type="topological domain" description="Cytoplasmic" evidence="1">
    <location>
        <begin position="120"/>
        <end position="138"/>
    </location>
</feature>
<feature type="transmembrane region" description="Helical; Name=4" evidence="1">
    <location>
        <begin position="139"/>
        <end position="157"/>
    </location>
</feature>
<feature type="topological domain" description="Extracellular" evidence="1">
    <location>
        <begin position="158"/>
        <end position="194"/>
    </location>
</feature>
<feature type="transmembrane region" description="Helical; Name=5" evidence="1">
    <location>
        <begin position="195"/>
        <end position="218"/>
    </location>
</feature>
<feature type="topological domain" description="Cytoplasmic" evidence="1">
    <location>
        <begin position="219"/>
        <end position="235"/>
    </location>
</feature>
<feature type="transmembrane region" description="Helical; Name=6" evidence="1">
    <location>
        <begin position="236"/>
        <end position="258"/>
    </location>
</feature>
<feature type="topological domain" description="Extracellular" evidence="1">
    <location>
        <begin position="259"/>
        <end position="271"/>
    </location>
</feature>
<feature type="transmembrane region" description="Helical; Name=7" evidence="1">
    <location>
        <begin position="272"/>
        <end position="291"/>
    </location>
</feature>
<feature type="topological domain" description="Cytoplasmic" evidence="1">
    <location>
        <begin position="292"/>
        <end position="312"/>
    </location>
</feature>
<feature type="glycosylation site" description="N-linked (GlcNAc...) asparagine" evidence="1">
    <location>
        <position position="5"/>
    </location>
</feature>
<feature type="glycosylation site" description="N-linked (GlcNAc...) asparagine" evidence="1">
    <location>
        <position position="88"/>
    </location>
</feature>
<feature type="disulfide bond" evidence="2">
    <location>
        <begin position="96"/>
        <end position="188"/>
    </location>
</feature>
<feature type="sequence variant" id="VAR_059987" description="In dbSNP:rs4925788.">
    <original>G</original>
    <variation>C</variation>
    <location>
        <position position="196"/>
    </location>
</feature>
<feature type="sequence variant" id="VAR_059988" description="In dbSNP:rs4925790.">
    <original>A</original>
    <variation>T</variation>
    <location>
        <position position="202"/>
    </location>
</feature>
<feature type="sequence variant" id="VAR_053147" description="In dbSNP:rs4925583.">
    <original>Y</original>
    <variation>C</variation>
    <location>
        <position position="217"/>
    </location>
</feature>
<feature type="sequence variant" id="VAR_062024" description="In dbSNP:rs4925792.">
    <original>H</original>
    <variation>R</variation>
    <location>
        <position position="226"/>
    </location>
</feature>
<feature type="sequence variant" id="VAR_059989" description="In dbSNP:rs10888282." evidence="3">
    <original>K</original>
    <variation>R</variation>
    <location>
        <position position="294"/>
    </location>
</feature>
<feature type="sequence variant" id="VAR_080452" description="In dbSNP:rs74155337." evidence="3">
    <original>T</original>
    <variation>K</variation>
    <location>
        <position position="301"/>
    </location>
</feature>
<proteinExistence type="evidence at transcript level"/>
<protein>
    <recommendedName>
        <fullName>Olfactory receptor 2L8</fullName>
    </recommendedName>
    <alternativeName>
        <fullName>Olfactory receptor OR1-46</fullName>
    </alternativeName>
</protein>
<accession>Q8NGY9</accession>
<accession>B9EIN6</accession>
<accession>Q6IF03</accession>
<sequence>MENYNQTSTDFILLGLFPPSRIDLFFFILIVFIFLMALIGNLSMILLIFLDTHLHTPMYFLLSQLSLIDLNYISTIVPKMASDFLHGNKSISFTGCGIQSFFFLALGGAEALLLASMAYDRYIAICFPLHYLIRMSKRVCVLMITGSWIIGSINACAHTVYVLHIPYCRSRAINHFFCDVPAMVTLACMDTWVYEGTVFLSATIFLVFPFIGISCSYGQVLFAVYHMKSAEGRKKAYLTCSTHLTVVTFYYAPFVYTYLRPRSLRSPTEDKVLAVFYTILTPMLNPIIYSLRNKEVMGALTRVSQRICSVKM</sequence>
<organism>
    <name type="scientific">Homo sapiens</name>
    <name type="common">Human</name>
    <dbReference type="NCBI Taxonomy" id="9606"/>
    <lineage>
        <taxon>Eukaryota</taxon>
        <taxon>Metazoa</taxon>
        <taxon>Chordata</taxon>
        <taxon>Craniata</taxon>
        <taxon>Vertebrata</taxon>
        <taxon>Euteleostomi</taxon>
        <taxon>Mammalia</taxon>
        <taxon>Eutheria</taxon>
        <taxon>Euarchontoglires</taxon>
        <taxon>Primates</taxon>
        <taxon>Haplorrhini</taxon>
        <taxon>Catarrhini</taxon>
        <taxon>Hominidae</taxon>
        <taxon>Homo</taxon>
    </lineage>
</organism>